<reference key="1">
    <citation type="journal article" date="1993" name="Virology">
        <title>DNA sequence analysis of conserved and unique regions of swinepox virus: identification of genetic elements supporting phenotypic observations including a novel G protein-coupled receptor homologue.</title>
        <authorList>
            <person name="Massung R.F."/>
            <person name="Jayarama V."/>
            <person name="Moyer R.W."/>
        </authorList>
    </citation>
    <scope>NUCLEOTIDE SEQUENCE [GENOMIC DNA]</scope>
</reference>
<sequence>MYKKYNSNVCIRNVLYVYLKYNTINKLSRYERMIYTKIKNQCEAIKYRYCNDFNSVTCILEYDENKYIDNVHKEVISILLSDSRPSIKLAAISLLSIIIDKLICRNIRIAKYIIDDIINIISEDGIYIILFLDEFDKYTDTRCRRRGLSMMIASIVTYYCLRYVLKI</sequence>
<proteinExistence type="predicted"/>
<accession>P32222</accession>
<gene>
    <name type="ORF">C10L</name>
</gene>
<organismHost>
    <name type="scientific">Sus scrofa</name>
    <name type="common">Pig</name>
    <dbReference type="NCBI Taxonomy" id="9823"/>
</organismHost>
<organism>
    <name type="scientific">Swinepox virus (strain Kasza)</name>
    <name type="common">SWPV</name>
    <dbReference type="NCBI Taxonomy" id="10277"/>
    <lineage>
        <taxon>Viruses</taxon>
        <taxon>Varidnaviria</taxon>
        <taxon>Bamfordvirae</taxon>
        <taxon>Nucleocytoviricota</taxon>
        <taxon>Pokkesviricetes</taxon>
        <taxon>Chitovirales</taxon>
        <taxon>Poxviridae</taxon>
        <taxon>Chordopoxvirinae</taxon>
        <taxon>Suipoxvirus</taxon>
        <taxon>Swinepox virus</taxon>
    </lineage>
</organism>
<protein>
    <recommendedName>
        <fullName>Uncharacterized protein C10</fullName>
    </recommendedName>
</protein>
<name>VC10_SWPVK</name>
<dbReference type="EMBL" id="L22013">
    <property type="protein sequence ID" value="AAC37861.1"/>
    <property type="molecule type" value="Genomic_DNA"/>
</dbReference>
<dbReference type="SMR" id="P32222"/>
<dbReference type="KEGG" id="vg:932395"/>
<dbReference type="GO" id="GO:0042981">
    <property type="term" value="P:regulation of apoptotic process"/>
    <property type="evidence" value="ECO:0007669"/>
    <property type="project" value="InterPro"/>
</dbReference>
<dbReference type="GO" id="GO:0033668">
    <property type="term" value="P:symbiont-mediated suppression of host apoptosis"/>
    <property type="evidence" value="ECO:0007669"/>
    <property type="project" value="InterPro"/>
</dbReference>
<dbReference type="Gene3D" id="1.10.437.10">
    <property type="entry name" value="Blc2-like"/>
    <property type="match status" value="1"/>
</dbReference>
<dbReference type="InterPro" id="IPR036834">
    <property type="entry name" value="Bcl-2-like_sf"/>
</dbReference>
<dbReference type="InterPro" id="IPR021119">
    <property type="entry name" value="Poxvirus_F1/C10"/>
</dbReference>
<dbReference type="Pfam" id="PF11099">
    <property type="entry name" value="M11L"/>
    <property type="match status" value="1"/>
</dbReference>
<feature type="chain" id="PRO_0000099753" description="Uncharacterized protein C10">
    <location>
        <begin position="1"/>
        <end position="167"/>
    </location>
</feature>